<keyword id="KW-0963">Cytoplasm</keyword>
<keyword id="KW-0489">Methyltransferase</keyword>
<keyword id="KW-1185">Reference proteome</keyword>
<keyword id="KW-0949">S-adenosyl-L-methionine</keyword>
<keyword id="KW-0808">Transferase</keyword>
<keyword id="KW-0819">tRNA processing</keyword>
<feature type="chain" id="PRO_1000130177" description="tRNA (guanine-N(1)-)-methyltransferase">
    <location>
        <begin position="1"/>
        <end position="270"/>
    </location>
</feature>
<feature type="binding site" evidence="1">
    <location>
        <position position="117"/>
    </location>
    <ligand>
        <name>S-adenosyl-L-methionine</name>
        <dbReference type="ChEBI" id="CHEBI:59789"/>
    </ligand>
</feature>
<feature type="binding site" evidence="1">
    <location>
        <begin position="137"/>
        <end position="142"/>
    </location>
    <ligand>
        <name>S-adenosyl-L-methionine</name>
        <dbReference type="ChEBI" id="CHEBI:59789"/>
    </ligand>
</feature>
<organism>
    <name type="scientific">Heliobacterium modesticaldum (strain ATCC 51547 / Ice1)</name>
    <dbReference type="NCBI Taxonomy" id="498761"/>
    <lineage>
        <taxon>Bacteria</taxon>
        <taxon>Bacillati</taxon>
        <taxon>Bacillota</taxon>
        <taxon>Clostridia</taxon>
        <taxon>Eubacteriales</taxon>
        <taxon>Heliobacteriaceae</taxon>
        <taxon>Heliomicrobium</taxon>
    </lineage>
</organism>
<evidence type="ECO:0000255" key="1">
    <source>
        <dbReference type="HAMAP-Rule" id="MF_00605"/>
    </source>
</evidence>
<protein>
    <recommendedName>
        <fullName evidence="1">tRNA (guanine-N(1)-)-methyltransferase</fullName>
        <ecNumber evidence="1">2.1.1.228</ecNumber>
    </recommendedName>
    <alternativeName>
        <fullName evidence="1">M1G-methyltransferase</fullName>
    </alternativeName>
    <alternativeName>
        <fullName evidence="1">tRNA [GM37] methyltransferase</fullName>
    </alternativeName>
</protein>
<name>TRMD_HELMI</name>
<accession>B0TH67</accession>
<reference key="1">
    <citation type="journal article" date="2008" name="J. Bacteriol.">
        <title>The genome of Heliobacterium modesticaldum, a phototrophic representative of the Firmicutes containing the simplest photosynthetic apparatus.</title>
        <authorList>
            <person name="Sattley W.M."/>
            <person name="Madigan M.T."/>
            <person name="Swingley W.D."/>
            <person name="Cheung P.C."/>
            <person name="Clocksin K.M."/>
            <person name="Conrad A.L."/>
            <person name="Dejesa L.C."/>
            <person name="Honchak B.M."/>
            <person name="Jung D.O."/>
            <person name="Karbach L.E."/>
            <person name="Kurdoglu A."/>
            <person name="Lahiri S."/>
            <person name="Mastrian S.D."/>
            <person name="Page L.E."/>
            <person name="Taylor H.L."/>
            <person name="Wang Z.T."/>
            <person name="Raymond J."/>
            <person name="Chen M."/>
            <person name="Blankenship R.E."/>
            <person name="Touchman J.W."/>
        </authorList>
    </citation>
    <scope>NUCLEOTIDE SEQUENCE [LARGE SCALE GENOMIC DNA]</scope>
    <source>
        <strain>ATCC 51547 / Ice1</strain>
    </source>
</reference>
<sequence length="270" mass="30146">MKIDVLTIFPEMFTGPMDVSIIGRAREKGILSFNAHDVRAYTTNKHRRVDDTPFGGGAGMVMNAQPFFDALAAILGPRELRDPLRSRVVLLTPQGAVFSQAKARELSGLQQLVLICGRYEGIDDRVRQAWVDEEISIGDYVLTGGELPAMVVIDAVVRLLPGALGDETSAEEESFSDGLLEYPQYTKPALFRGMEAPPELLSGHHAAIRRWRRKEAFKRTYQNRPELLIGRPLPFDDQVLLAEALRELGLDAEIPEKPKKKRAKGREPRT</sequence>
<gene>
    <name evidence="1" type="primary">trmD</name>
    <name type="ordered locus">Helmi_21170</name>
    <name type="ORF">HM1_2186</name>
</gene>
<proteinExistence type="inferred from homology"/>
<comment type="function">
    <text evidence="1">Specifically methylates guanosine-37 in various tRNAs.</text>
</comment>
<comment type="catalytic activity">
    <reaction evidence="1">
        <text>guanosine(37) in tRNA + S-adenosyl-L-methionine = N(1)-methylguanosine(37) in tRNA + S-adenosyl-L-homocysteine + H(+)</text>
        <dbReference type="Rhea" id="RHEA:36899"/>
        <dbReference type="Rhea" id="RHEA-COMP:10145"/>
        <dbReference type="Rhea" id="RHEA-COMP:10147"/>
        <dbReference type="ChEBI" id="CHEBI:15378"/>
        <dbReference type="ChEBI" id="CHEBI:57856"/>
        <dbReference type="ChEBI" id="CHEBI:59789"/>
        <dbReference type="ChEBI" id="CHEBI:73542"/>
        <dbReference type="ChEBI" id="CHEBI:74269"/>
        <dbReference type="EC" id="2.1.1.228"/>
    </reaction>
</comment>
<comment type="subunit">
    <text evidence="1">Homodimer.</text>
</comment>
<comment type="subcellular location">
    <subcellularLocation>
        <location evidence="1">Cytoplasm</location>
    </subcellularLocation>
</comment>
<comment type="similarity">
    <text evidence="1">Belongs to the RNA methyltransferase TrmD family.</text>
</comment>
<dbReference type="EC" id="2.1.1.228" evidence="1"/>
<dbReference type="EMBL" id="CP000930">
    <property type="protein sequence ID" value="ABZ84742.1"/>
    <property type="molecule type" value="Genomic_DNA"/>
</dbReference>
<dbReference type="RefSeq" id="WP_012283242.1">
    <property type="nucleotide sequence ID" value="NC_010337.2"/>
</dbReference>
<dbReference type="SMR" id="B0TH67"/>
<dbReference type="STRING" id="498761.HM1_2186"/>
<dbReference type="KEGG" id="hmo:HM1_2186"/>
<dbReference type="eggNOG" id="COG0336">
    <property type="taxonomic scope" value="Bacteria"/>
</dbReference>
<dbReference type="HOGENOM" id="CLU_047363_0_1_9"/>
<dbReference type="OrthoDB" id="9807416at2"/>
<dbReference type="Proteomes" id="UP000008550">
    <property type="component" value="Chromosome"/>
</dbReference>
<dbReference type="GO" id="GO:0005829">
    <property type="term" value="C:cytosol"/>
    <property type="evidence" value="ECO:0007669"/>
    <property type="project" value="TreeGrafter"/>
</dbReference>
<dbReference type="GO" id="GO:0052906">
    <property type="term" value="F:tRNA (guanine(37)-N1)-methyltransferase activity"/>
    <property type="evidence" value="ECO:0007669"/>
    <property type="project" value="UniProtKB-UniRule"/>
</dbReference>
<dbReference type="GO" id="GO:0002939">
    <property type="term" value="P:tRNA N1-guanine methylation"/>
    <property type="evidence" value="ECO:0007669"/>
    <property type="project" value="TreeGrafter"/>
</dbReference>
<dbReference type="CDD" id="cd18080">
    <property type="entry name" value="TrmD-like"/>
    <property type="match status" value="1"/>
</dbReference>
<dbReference type="FunFam" id="1.10.1270.20:FF:000001">
    <property type="entry name" value="tRNA (guanine-N(1)-)-methyltransferase"/>
    <property type="match status" value="1"/>
</dbReference>
<dbReference type="FunFam" id="3.40.1280.10:FF:000001">
    <property type="entry name" value="tRNA (guanine-N(1)-)-methyltransferase"/>
    <property type="match status" value="1"/>
</dbReference>
<dbReference type="Gene3D" id="3.40.1280.10">
    <property type="match status" value="1"/>
</dbReference>
<dbReference type="Gene3D" id="1.10.1270.20">
    <property type="entry name" value="tRNA(m1g37)methyltransferase, domain 2"/>
    <property type="match status" value="1"/>
</dbReference>
<dbReference type="HAMAP" id="MF_00605">
    <property type="entry name" value="TrmD"/>
    <property type="match status" value="1"/>
</dbReference>
<dbReference type="InterPro" id="IPR029028">
    <property type="entry name" value="Alpha/beta_knot_MTases"/>
</dbReference>
<dbReference type="InterPro" id="IPR023148">
    <property type="entry name" value="tRNA_m1G_MeTrfase_C_sf"/>
</dbReference>
<dbReference type="InterPro" id="IPR002649">
    <property type="entry name" value="tRNA_m1G_MeTrfase_TrmD"/>
</dbReference>
<dbReference type="InterPro" id="IPR029026">
    <property type="entry name" value="tRNA_m1G_MTases_N"/>
</dbReference>
<dbReference type="InterPro" id="IPR016009">
    <property type="entry name" value="tRNA_MeTrfase_TRMD/TRM10"/>
</dbReference>
<dbReference type="NCBIfam" id="NF000648">
    <property type="entry name" value="PRK00026.1"/>
    <property type="match status" value="1"/>
</dbReference>
<dbReference type="NCBIfam" id="TIGR00088">
    <property type="entry name" value="trmD"/>
    <property type="match status" value="1"/>
</dbReference>
<dbReference type="PANTHER" id="PTHR46417">
    <property type="entry name" value="TRNA (GUANINE-N(1)-)-METHYLTRANSFERASE"/>
    <property type="match status" value="1"/>
</dbReference>
<dbReference type="PANTHER" id="PTHR46417:SF1">
    <property type="entry name" value="TRNA (GUANINE-N(1)-)-METHYLTRANSFERASE"/>
    <property type="match status" value="1"/>
</dbReference>
<dbReference type="Pfam" id="PF01746">
    <property type="entry name" value="tRNA_m1G_MT"/>
    <property type="match status" value="1"/>
</dbReference>
<dbReference type="PIRSF" id="PIRSF000386">
    <property type="entry name" value="tRNA_mtase"/>
    <property type="match status" value="1"/>
</dbReference>
<dbReference type="SUPFAM" id="SSF75217">
    <property type="entry name" value="alpha/beta knot"/>
    <property type="match status" value="1"/>
</dbReference>